<gene>
    <name evidence="1" type="primary">PB1</name>
</gene>
<name>PB1F2_I02A2</name>
<protein>
    <recommendedName>
        <fullName evidence="1">Protein PB1-F2</fullName>
    </recommendedName>
</protein>
<sequence length="90" mass="10836">MEQEQDTPWTRSIEHINTQRRGNGQQTPKLEHPNSIQLMDHYPRITSRADMHKQIVCWKQWLSSKNPTQGSLKTHVLKRWKLFSKQEWTN</sequence>
<evidence type="ECO:0000255" key="1">
    <source>
        <dbReference type="HAMAP-Rule" id="MF_04064"/>
    </source>
</evidence>
<evidence type="ECO:0000256" key="2">
    <source>
        <dbReference type="SAM" id="MobiDB-lite"/>
    </source>
</evidence>
<comment type="function">
    <text evidence="1">Plays an important role in promoting lung pathology in both primary viral infection and secondary bacterial infection. Promotes alteration of mitochondrial morphology, dissipation of mitochondrial membrane potential, and cell death. Alternatively, inhibits the production of interferon in the infected cell at the level of host mitochondrial antiviral signaling MAVS. Its level of expression differs greatly depending on which cell type is infected, in a manner that is independent of the levels of expression of other viral proteins. Monocytic cells are more affected than epithelial cells. Seems to disable virus-infected monocytes or other host innate immune cells. During early stage of infection, predisposes the mitochondria to permeability transition through interaction with host SLC25A6/ANT3 and VDAC1. These proteins participate in the formation of the permeability transition pore complex (PTPC) responsible of the release of mitochondrial products that triggers apoptosis.</text>
</comment>
<comment type="subunit">
    <text evidence="1">Oligomer. Interacts with human SLC25A6/ANT3 and VDAC1. Interacts with host MAVS.</text>
</comment>
<comment type="subcellular location">
    <subcellularLocation>
        <location evidence="1">Host mitochondrion inner membrane</location>
    </subcellularLocation>
    <subcellularLocation>
        <location evidence="1">Host nucleus</location>
    </subcellularLocation>
    <subcellularLocation>
        <location evidence="1">Host cytoplasm</location>
        <location evidence="1">Host cytosol</location>
    </subcellularLocation>
    <text evidence="1">Inner mitochondrial membrane in most cells types. Otherwise is detected in the nucleus and cytosol.</text>
</comment>
<comment type="miscellaneous">
    <text>Is not encoded in all strains, and seems to be dispensable for replication.</text>
</comment>
<comment type="similarity">
    <text evidence="1">Belongs to the influenza viruses PB1-F2 family.</text>
</comment>
<organismHost>
    <name type="scientific">Aves</name>
    <dbReference type="NCBI Taxonomy" id="8782"/>
</organismHost>
<organismHost>
    <name type="scientific">Felis catus</name>
    <name type="common">Cat</name>
    <name type="synonym">Felis silvestris catus</name>
    <dbReference type="NCBI Taxonomy" id="9685"/>
</organismHost>
<organismHost>
    <name type="scientific">Homo sapiens</name>
    <name type="common">Human</name>
    <dbReference type="NCBI Taxonomy" id="9606"/>
</organismHost>
<organismHost>
    <name type="scientific">Panthera pardus</name>
    <name type="common">Leopard</name>
    <name type="synonym">Felis pardus</name>
    <dbReference type="NCBI Taxonomy" id="9691"/>
</organismHost>
<organismHost>
    <name type="scientific">Panthera tigris</name>
    <name type="common">Tiger</name>
    <dbReference type="NCBI Taxonomy" id="9694"/>
</organismHost>
<organismHost>
    <name type="scientific">Sus scrofa</name>
    <name type="common">Pig</name>
    <dbReference type="NCBI Taxonomy" id="9823"/>
</organismHost>
<proteinExistence type="inferred from homology"/>
<organism>
    <name type="scientific">Influenza A virus (strain A/Chicken/Hong Kong/31.2/2002 H5N1 genotype X1)</name>
    <dbReference type="NCBI Taxonomy" id="284169"/>
    <lineage>
        <taxon>Viruses</taxon>
        <taxon>Riboviria</taxon>
        <taxon>Orthornavirae</taxon>
        <taxon>Negarnaviricota</taxon>
        <taxon>Polyploviricotina</taxon>
        <taxon>Insthoviricetes</taxon>
        <taxon>Articulavirales</taxon>
        <taxon>Orthomyxoviridae</taxon>
        <taxon>Alphainfluenzavirus</taxon>
        <taxon>Alphainfluenzavirus influenzae</taxon>
        <taxon>Influenza A virus</taxon>
    </lineage>
</organism>
<reference key="1">
    <citation type="journal article" date="2004" name="Nature">
        <title>Genesis of a highly pathogenic and potentially pandemic H5N1 influenza virus in eastern Asia.</title>
        <authorList>
            <person name="Li K.S."/>
            <person name="Guan Y."/>
            <person name="Wang J."/>
            <person name="Smith G.J.D."/>
            <person name="Xu K.M."/>
            <person name="Duan L."/>
            <person name="Rahardjo A.P."/>
            <person name="Puthavathana P."/>
            <person name="Buranathai C."/>
            <person name="Nguyen T.D."/>
            <person name="Estoepangestie A.T.S."/>
            <person name="Chaisingh A."/>
            <person name="Auewarakul P."/>
            <person name="Long H.T."/>
            <person name="Hanh N.T.H."/>
            <person name="Webby R.J."/>
            <person name="Poon L.L.M."/>
            <person name="Chen H."/>
            <person name="Shortridge K.F."/>
            <person name="Yuen K.Y."/>
            <person name="Webster R.G."/>
            <person name="Peiris J.S.M."/>
        </authorList>
    </citation>
    <scope>NUCLEOTIDE SEQUENCE [GENOMIC RNA]</scope>
</reference>
<keyword id="KW-0053">Apoptosis</keyword>
<keyword id="KW-1035">Host cytoplasm</keyword>
<keyword id="KW-1043">Host membrane</keyword>
<keyword id="KW-1045">Host mitochondrion</keyword>
<keyword id="KW-1046">Host mitochondrion inner membrane</keyword>
<keyword id="KW-1048">Host nucleus</keyword>
<keyword id="KW-0945">Host-virus interaction</keyword>
<keyword id="KW-1090">Inhibition of host innate immune response by virus</keyword>
<keyword id="KW-1097">Inhibition of host MAVS by virus</keyword>
<keyword id="KW-1113">Inhibition of host RLR pathway by virus</keyword>
<keyword id="KW-0472">Membrane</keyword>
<keyword id="KW-1119">Modulation of host cell apoptosis by virus</keyword>
<keyword id="KW-0899">Viral immunoevasion</keyword>
<feature type="chain" id="PRO_0000311642" description="Protein PB1-F2">
    <location>
        <begin position="1"/>
        <end position="90"/>
    </location>
</feature>
<feature type="region of interest" description="Disordered" evidence="2">
    <location>
        <begin position="1"/>
        <end position="34"/>
    </location>
</feature>
<feature type="region of interest" description="Mitochondrial targeting sequence" evidence="1">
    <location>
        <begin position="65"/>
        <end position="87"/>
    </location>
</feature>
<feature type="compositionally biased region" description="Polar residues" evidence="2">
    <location>
        <begin position="1"/>
        <end position="28"/>
    </location>
</feature>
<feature type="site" description="Low pathogenicity" evidence="1">
    <location>
        <position position="66"/>
    </location>
</feature>
<dbReference type="EMBL" id="AY651677">
    <property type="status" value="NOT_ANNOTATED_CDS"/>
    <property type="molecule type" value="Genomic_RNA"/>
</dbReference>
<dbReference type="SMR" id="P0C5V1"/>
<dbReference type="GO" id="GO:0044164">
    <property type="term" value="C:host cell cytosol"/>
    <property type="evidence" value="ECO:0007669"/>
    <property type="project" value="UniProtKB-SubCell"/>
</dbReference>
<dbReference type="GO" id="GO:0044192">
    <property type="term" value="C:host cell mitochondrial inner membrane"/>
    <property type="evidence" value="ECO:0007669"/>
    <property type="project" value="UniProtKB-SubCell"/>
</dbReference>
<dbReference type="GO" id="GO:0042025">
    <property type="term" value="C:host cell nucleus"/>
    <property type="evidence" value="ECO:0007669"/>
    <property type="project" value="UniProtKB-SubCell"/>
</dbReference>
<dbReference type="GO" id="GO:0016020">
    <property type="term" value="C:membrane"/>
    <property type="evidence" value="ECO:0007669"/>
    <property type="project" value="UniProtKB-UniRule"/>
</dbReference>
<dbReference type="GO" id="GO:0052150">
    <property type="term" value="P:symbiont-mediated perturbation of host apoptosis"/>
    <property type="evidence" value="ECO:0007669"/>
    <property type="project" value="UniProtKB-KW"/>
</dbReference>
<dbReference type="GO" id="GO:0039545">
    <property type="term" value="P:symbiont-mediated suppression of host cytoplasmic pattern recognition receptor signaling pathway via inhibition of MAVS activity"/>
    <property type="evidence" value="ECO:0007669"/>
    <property type="project" value="UniProtKB-KW"/>
</dbReference>
<dbReference type="HAMAP" id="MF_04064">
    <property type="entry name" value="INFV_PB1F2"/>
    <property type="match status" value="1"/>
</dbReference>
<dbReference type="InterPro" id="IPR021045">
    <property type="entry name" value="Flu_proapoptotic_PB1-F2"/>
</dbReference>
<dbReference type="Pfam" id="PF11986">
    <property type="entry name" value="PB1-F2"/>
    <property type="match status" value="1"/>
</dbReference>
<accession>P0C5V1</accession>